<evidence type="ECO:0000255" key="1"/>
<evidence type="ECO:0000305" key="2"/>
<dbReference type="EC" id="3.1.-.-"/>
<dbReference type="EMBL" id="AB069999">
    <property type="protein sequence ID" value="BAB62944.1"/>
    <property type="status" value="ALT_INIT"/>
    <property type="molecule type" value="mRNA"/>
</dbReference>
<dbReference type="EMBL" id="AB070112">
    <property type="protein sequence ID" value="BAB63057.1"/>
    <property type="status" value="ALT_INIT"/>
    <property type="molecule type" value="mRNA"/>
</dbReference>
<dbReference type="SMR" id="Q95JR7"/>
<dbReference type="STRING" id="9541.ENSMFAP00000002280"/>
<dbReference type="GlyCosmos" id="Q95JR7">
    <property type="glycosylation" value="2 sites, No reported glycans"/>
</dbReference>
<dbReference type="eggNOG" id="KOG2258">
    <property type="taxonomic scope" value="Eukaryota"/>
</dbReference>
<dbReference type="Proteomes" id="UP000233100">
    <property type="component" value="Unplaced"/>
</dbReference>
<dbReference type="GO" id="GO:0016020">
    <property type="term" value="C:membrane"/>
    <property type="evidence" value="ECO:0007669"/>
    <property type="project" value="UniProtKB-SubCell"/>
</dbReference>
<dbReference type="GO" id="GO:0008889">
    <property type="term" value="F:glycerophosphodiester phosphodiesterase activity"/>
    <property type="evidence" value="ECO:0007669"/>
    <property type="project" value="TreeGrafter"/>
</dbReference>
<dbReference type="GO" id="GO:0046872">
    <property type="term" value="F:metal ion binding"/>
    <property type="evidence" value="ECO:0007669"/>
    <property type="project" value="UniProtKB-KW"/>
</dbReference>
<dbReference type="GO" id="GO:0006629">
    <property type="term" value="P:lipid metabolic process"/>
    <property type="evidence" value="ECO:0007669"/>
    <property type="project" value="InterPro"/>
</dbReference>
<dbReference type="Gene3D" id="3.20.20.190">
    <property type="entry name" value="Phosphatidylinositol (PI) phosphodiesterase"/>
    <property type="match status" value="1"/>
</dbReference>
<dbReference type="InterPro" id="IPR030395">
    <property type="entry name" value="GP_PDE_dom"/>
</dbReference>
<dbReference type="InterPro" id="IPR017946">
    <property type="entry name" value="PLC-like_Pdiesterase_TIM-brl"/>
</dbReference>
<dbReference type="PANTHER" id="PTHR23344:SF13">
    <property type="entry name" value="GLYCEROPHOSPHODIESTER PHOSPHODIESTERASE DOMAIN-CONTAINING PROTEIN 4"/>
    <property type="match status" value="1"/>
</dbReference>
<dbReference type="PANTHER" id="PTHR23344">
    <property type="entry name" value="GLYCEROPHOSPHORYL DIESTER PHOSPHODIESTERASE"/>
    <property type="match status" value="1"/>
</dbReference>
<dbReference type="Pfam" id="PF03009">
    <property type="entry name" value="GDPD"/>
    <property type="match status" value="1"/>
</dbReference>
<dbReference type="SUPFAM" id="SSF51695">
    <property type="entry name" value="PLC-like phosphodiesterases"/>
    <property type="match status" value="1"/>
</dbReference>
<dbReference type="PROSITE" id="PS51704">
    <property type="entry name" value="GP_PDE"/>
    <property type="match status" value="1"/>
</dbReference>
<reference key="1">
    <citation type="journal article" date="2002" name="BMC Genomics">
        <title>Cynomolgus monkey testicular cDNAs for discovery of novel human genes in the human genome sequence.</title>
        <authorList>
            <person name="Osada N."/>
            <person name="Hida M."/>
            <person name="Kusuda J."/>
            <person name="Tanuma R."/>
            <person name="Hirata M."/>
            <person name="Suto Y."/>
            <person name="Hirai M."/>
            <person name="Terao K."/>
            <person name="Sugano S."/>
            <person name="Hashimoto K."/>
        </authorList>
    </citation>
    <scope>NUCLEOTIDE SEQUENCE [LARGE SCALE MRNA]</scope>
    <source>
        <tissue>Testis</tissue>
    </source>
</reference>
<reference key="2">
    <citation type="submission" date="2001-08" db="EMBL/GenBank/DDBJ databases">
        <title>Isolation of novel full-length cDNA clones from macaque testis cDNA libraries.</title>
        <authorList>
            <person name="Hashimoto K."/>
            <person name="Osada N."/>
            <person name="Hida M."/>
            <person name="Kusuda J."/>
            <person name="Tanuma R."/>
            <person name="Hirai M."/>
            <person name="Terao K."/>
            <person name="Sugano S."/>
        </authorList>
    </citation>
    <scope>NUCLEOTIDE SEQUENCE [LARGE SCALE MRNA] OF 89-627</scope>
    <source>
        <tissue>Testis</tissue>
    </source>
</reference>
<keyword id="KW-0325">Glycoprotein</keyword>
<keyword id="KW-0378">Hydrolase</keyword>
<keyword id="KW-0472">Membrane</keyword>
<keyword id="KW-0479">Metal-binding</keyword>
<keyword id="KW-1185">Reference proteome</keyword>
<keyword id="KW-0812">Transmembrane</keyword>
<keyword id="KW-1133">Transmembrane helix</keyword>
<protein>
    <recommendedName>
        <fullName>Glycerophosphodiester phosphodiesterase domain-containing protein 4</fullName>
        <ecNumber>3.1.-.-</ecNumber>
    </recommendedName>
</protein>
<comment type="subcellular location">
    <subcellularLocation>
        <location evidence="2">Membrane</location>
        <topology evidence="2">Multi-pass membrane protein</topology>
    </subcellularLocation>
</comment>
<comment type="similarity">
    <text evidence="2">Belongs to the glycerophosphoryl diester phosphodiesterase family.</text>
</comment>
<comment type="sequence caution" evidence="2">
    <conflict type="erroneous initiation">
        <sequence resource="EMBL-CDS" id="BAB62944"/>
    </conflict>
</comment>
<comment type="sequence caution" evidence="2">
    <conflict type="erroneous initiation">
        <sequence resource="EMBL-CDS" id="BAB63057"/>
    </conflict>
</comment>
<organism>
    <name type="scientific">Macaca fascicularis</name>
    <name type="common">Crab-eating macaque</name>
    <name type="synonym">Cynomolgus monkey</name>
    <dbReference type="NCBI Taxonomy" id="9541"/>
    <lineage>
        <taxon>Eukaryota</taxon>
        <taxon>Metazoa</taxon>
        <taxon>Chordata</taxon>
        <taxon>Craniata</taxon>
        <taxon>Vertebrata</taxon>
        <taxon>Euteleostomi</taxon>
        <taxon>Mammalia</taxon>
        <taxon>Eutheria</taxon>
        <taxon>Euarchontoglires</taxon>
        <taxon>Primates</taxon>
        <taxon>Haplorrhini</taxon>
        <taxon>Catarrhini</taxon>
        <taxon>Cercopithecidae</taxon>
        <taxon>Cercopithecinae</taxon>
        <taxon>Macaca</taxon>
    </lineage>
</organism>
<feature type="chain" id="PRO_0000251939" description="Glycerophosphodiester phosphodiesterase domain-containing protein 4">
    <location>
        <begin position="1"/>
        <end position="627"/>
    </location>
</feature>
<feature type="topological domain" description="Cytoplasmic" evidence="1">
    <location>
        <begin position="1"/>
        <end position="17"/>
    </location>
</feature>
<feature type="transmembrane region" description="Helical" evidence="1">
    <location>
        <begin position="18"/>
        <end position="38"/>
    </location>
</feature>
<feature type="topological domain" description="Extracellular" evidence="1">
    <location>
        <position position="39"/>
    </location>
</feature>
<feature type="transmembrane region" description="Helical" evidence="1">
    <location>
        <begin position="40"/>
        <end position="60"/>
    </location>
</feature>
<feature type="topological domain" description="Cytoplasmic" evidence="1">
    <location>
        <begin position="61"/>
        <end position="69"/>
    </location>
</feature>
<feature type="transmembrane region" description="Helical" evidence="1">
    <location>
        <begin position="70"/>
        <end position="90"/>
    </location>
</feature>
<feature type="topological domain" description="Extracellular" evidence="1">
    <location>
        <begin position="91"/>
        <end position="107"/>
    </location>
</feature>
<feature type="transmembrane region" description="Helical" evidence="1">
    <location>
        <begin position="108"/>
        <end position="128"/>
    </location>
</feature>
<feature type="topological domain" description="Cytoplasmic" evidence="1">
    <location>
        <begin position="129"/>
        <end position="162"/>
    </location>
</feature>
<feature type="transmembrane region" description="Helical" evidence="1">
    <location>
        <begin position="163"/>
        <end position="183"/>
    </location>
</feature>
<feature type="topological domain" description="Extracellular" evidence="1">
    <location>
        <begin position="184"/>
        <end position="468"/>
    </location>
</feature>
<feature type="transmembrane region" description="Helical" evidence="1">
    <location>
        <begin position="469"/>
        <end position="489"/>
    </location>
</feature>
<feature type="topological domain" description="Cytoplasmic" evidence="1">
    <location>
        <begin position="490"/>
        <end position="627"/>
    </location>
</feature>
<feature type="domain" description="GP-PDE">
    <location>
        <begin position="198"/>
        <end position="457"/>
    </location>
</feature>
<feature type="binding site" evidence="1">
    <location>
        <position position="230"/>
    </location>
    <ligand>
        <name>a divalent metal cation</name>
        <dbReference type="ChEBI" id="CHEBI:60240"/>
    </ligand>
</feature>
<feature type="binding site" evidence="1">
    <location>
        <position position="232"/>
    </location>
    <ligand>
        <name>a divalent metal cation</name>
        <dbReference type="ChEBI" id="CHEBI:60240"/>
    </ligand>
</feature>
<feature type="binding site" evidence="1">
    <location>
        <position position="245"/>
    </location>
    <ligand>
        <name>a divalent metal cation</name>
        <dbReference type="ChEBI" id="CHEBI:60240"/>
    </ligand>
</feature>
<feature type="glycosylation site" description="N-linked (GlcNAc...) asparagine" evidence="1">
    <location>
        <position position="308"/>
    </location>
</feature>
<feature type="glycosylation site" description="N-linked (GlcNAc...) asparagine" evidence="1">
    <location>
        <position position="397"/>
    </location>
</feature>
<accession>Q95JR7</accession>
<accession>Q95K28</accession>
<gene>
    <name type="primary">GDPD4</name>
    <name type="ORF">QtsA-10771</name>
    <name type="ORF">QtsA-10831</name>
</gene>
<name>GDPD4_MACFA</name>
<sequence>MLLFLWIETSNEYFNFDWVIFLGTGYWFYWSIFILSLAGILTAYSSLLLLLGLLLLWEGIELYLHLCHKILILLVILPCVILMFIICKFWKERWLVAGLSLQIFAPYVHLVSITVMVILFWPVAIYVARLEREVRMRRYRMTHSEKKRLKKCNVIARLRGLQVAVGLPFLLIFLSLCLMPLGIYSPCIQEKENLGPKPTLFGHRGAPMLGPENTMMSFEKAVEHGAHGLETDVHLSYDRVPFLMHDFDLRRTTNIREVQPESAFKNPATFSWDFLSTLNAGKWFVKPELKPFYNMKPLSKADKERARNQSIPTLADLLTLAKKERKFVIFDLRGPPPRHPLRHTFVRQVVSVILASKIEQHLIFWLPAHDRRYVRSMAPGFQHVGHLVSVKTLAKNNISIINVDYKKLFPNGLRDYKAANIRINVYTINEPWLFSLAWCSRINSVTTDNIGLLSQLNHPHFFMTPKFYMFIWLLVDIISVLFIVAIFCFHWRRETIKEKLFETSSTLTDTQSRSENEEDLHIAMKPARVVESPWTLAALYPALSKSGKEHQGRFNFAAPSKKLVPIKNAVTPLKPGKHDIQPPMPTTVFELTQAPSRQAKSKATFQTTLPTLKVDKPTMPSVEVPYP</sequence>
<proteinExistence type="evidence at transcript level"/>